<proteinExistence type="inferred from homology"/>
<sequence>MSHPALTQLRALRYFKEIPALEPQLLDWLLLEDSMTKRFEQQGKTVSVTMIREGFVEQNEIPEELPLLPKESRYWLREILLCADGEPWLAGRTVVPVSTLSGPELALQKLGKTPLGRYLFTSSTLTRDFIEIGRDAGLWGRRSRLRLSGKPLLLTELFLPASPLY</sequence>
<protein>
    <recommendedName>
        <fullName evidence="1">Chorismate pyruvate-lyase</fullName>
        <shortName evidence="1">CL</shortName>
        <shortName evidence="1">CPL</shortName>
        <ecNumber evidence="1">4.1.3.40</ecNumber>
    </recommendedName>
</protein>
<gene>
    <name evidence="1" type="primary">ubiC</name>
    <name type="ordered locus">SDY_4535</name>
</gene>
<comment type="function">
    <text evidence="1">Removes the pyruvyl group from chorismate, with concomitant aromatization of the ring, to provide 4-hydroxybenzoate (4HB) for the ubiquinone pathway.</text>
</comment>
<comment type="catalytic activity">
    <reaction evidence="1">
        <text>chorismate = 4-hydroxybenzoate + pyruvate</text>
        <dbReference type="Rhea" id="RHEA:16505"/>
        <dbReference type="ChEBI" id="CHEBI:15361"/>
        <dbReference type="ChEBI" id="CHEBI:17879"/>
        <dbReference type="ChEBI" id="CHEBI:29748"/>
        <dbReference type="EC" id="4.1.3.40"/>
    </reaction>
</comment>
<comment type="pathway">
    <text evidence="1">Cofactor biosynthesis; ubiquinone biosynthesis.</text>
</comment>
<comment type="subunit">
    <text evidence="1">Monomer.</text>
</comment>
<comment type="subcellular location">
    <subcellularLocation>
        <location evidence="1">Cytoplasm</location>
    </subcellularLocation>
</comment>
<comment type="similarity">
    <text evidence="1">Belongs to the UbiC family.</text>
</comment>
<comment type="sequence caution" evidence="2">
    <conflict type="erroneous initiation">
        <sequence resource="EMBL-CDS" id="ABB64409"/>
    </conflict>
    <text>Extended N-terminus.</text>
</comment>
<name>UBIC_SHIDS</name>
<dbReference type="EC" id="4.1.3.40" evidence="1"/>
<dbReference type="EMBL" id="CP000034">
    <property type="protein sequence ID" value="ABB64409.1"/>
    <property type="status" value="ALT_INIT"/>
    <property type="molecule type" value="Genomic_DNA"/>
</dbReference>
<dbReference type="RefSeq" id="WP_001297295.1">
    <property type="nucleotide sequence ID" value="NC_007606.1"/>
</dbReference>
<dbReference type="RefSeq" id="YP_405900.2">
    <property type="nucleotide sequence ID" value="NC_007606.1"/>
</dbReference>
<dbReference type="SMR" id="Q327U6"/>
<dbReference type="STRING" id="300267.SDY_4535"/>
<dbReference type="EnsemblBacteria" id="ABB64409">
    <property type="protein sequence ID" value="ABB64409"/>
    <property type="gene ID" value="SDY_4535"/>
</dbReference>
<dbReference type="GeneID" id="75204183"/>
<dbReference type="KEGG" id="sdy:SDY_4535"/>
<dbReference type="PATRIC" id="fig|300267.13.peg.5359"/>
<dbReference type="HOGENOM" id="CLU_096824_1_0_6"/>
<dbReference type="UniPathway" id="UPA00232"/>
<dbReference type="Proteomes" id="UP000002716">
    <property type="component" value="Chromosome"/>
</dbReference>
<dbReference type="GO" id="GO:0005829">
    <property type="term" value="C:cytosol"/>
    <property type="evidence" value="ECO:0007669"/>
    <property type="project" value="TreeGrafter"/>
</dbReference>
<dbReference type="GO" id="GO:0008813">
    <property type="term" value="F:chorismate lyase activity"/>
    <property type="evidence" value="ECO:0007669"/>
    <property type="project" value="UniProtKB-UniRule"/>
</dbReference>
<dbReference type="GO" id="GO:0042866">
    <property type="term" value="P:pyruvate biosynthetic process"/>
    <property type="evidence" value="ECO:0007669"/>
    <property type="project" value="UniProtKB-UniRule"/>
</dbReference>
<dbReference type="GO" id="GO:0006744">
    <property type="term" value="P:ubiquinone biosynthetic process"/>
    <property type="evidence" value="ECO:0007669"/>
    <property type="project" value="UniProtKB-UniRule"/>
</dbReference>
<dbReference type="FunFam" id="3.40.1410.10:FF:000002">
    <property type="entry name" value="Chorismate pyruvate-lyase"/>
    <property type="match status" value="1"/>
</dbReference>
<dbReference type="Gene3D" id="3.40.1410.10">
    <property type="entry name" value="Chorismate lyase-like"/>
    <property type="match status" value="1"/>
</dbReference>
<dbReference type="HAMAP" id="MF_01632">
    <property type="entry name" value="UbiC"/>
    <property type="match status" value="1"/>
</dbReference>
<dbReference type="InterPro" id="IPR007440">
    <property type="entry name" value="Chorismate--pyruvate_lyase"/>
</dbReference>
<dbReference type="InterPro" id="IPR028978">
    <property type="entry name" value="Chorismate_lyase_/UTRA_dom_sf"/>
</dbReference>
<dbReference type="NCBIfam" id="NF008656">
    <property type="entry name" value="PRK11655.1"/>
    <property type="match status" value="1"/>
</dbReference>
<dbReference type="PANTHER" id="PTHR38683">
    <property type="entry name" value="CHORISMATE PYRUVATE-LYASE"/>
    <property type="match status" value="1"/>
</dbReference>
<dbReference type="PANTHER" id="PTHR38683:SF1">
    <property type="entry name" value="CHORISMATE PYRUVATE-LYASE"/>
    <property type="match status" value="1"/>
</dbReference>
<dbReference type="Pfam" id="PF04345">
    <property type="entry name" value="Chor_lyase"/>
    <property type="match status" value="1"/>
</dbReference>
<dbReference type="SUPFAM" id="SSF64288">
    <property type="entry name" value="Chorismate lyase-like"/>
    <property type="match status" value="1"/>
</dbReference>
<feature type="chain" id="PRO_0000240574" description="Chorismate pyruvate-lyase">
    <location>
        <begin position="1"/>
        <end position="165"/>
    </location>
</feature>
<feature type="binding site" evidence="1">
    <location>
        <position position="35"/>
    </location>
    <ligand>
        <name>substrate</name>
    </ligand>
</feature>
<feature type="binding site" evidence="1">
    <location>
        <position position="77"/>
    </location>
    <ligand>
        <name>substrate</name>
    </ligand>
</feature>
<feature type="binding site" evidence="1">
    <location>
        <position position="115"/>
    </location>
    <ligand>
        <name>substrate</name>
    </ligand>
</feature>
<feature type="binding site" evidence="1">
    <location>
        <position position="156"/>
    </location>
    <ligand>
        <name>substrate</name>
    </ligand>
</feature>
<keyword id="KW-0963">Cytoplasm</keyword>
<keyword id="KW-0456">Lyase</keyword>
<keyword id="KW-0670">Pyruvate</keyword>
<keyword id="KW-1185">Reference proteome</keyword>
<keyword id="KW-0831">Ubiquinone biosynthesis</keyword>
<evidence type="ECO:0000255" key="1">
    <source>
        <dbReference type="HAMAP-Rule" id="MF_01632"/>
    </source>
</evidence>
<evidence type="ECO:0000305" key="2"/>
<reference key="1">
    <citation type="journal article" date="2005" name="Nucleic Acids Res.">
        <title>Genome dynamics and diversity of Shigella species, the etiologic agents of bacillary dysentery.</title>
        <authorList>
            <person name="Yang F."/>
            <person name="Yang J."/>
            <person name="Zhang X."/>
            <person name="Chen L."/>
            <person name="Jiang Y."/>
            <person name="Yan Y."/>
            <person name="Tang X."/>
            <person name="Wang J."/>
            <person name="Xiong Z."/>
            <person name="Dong J."/>
            <person name="Xue Y."/>
            <person name="Zhu Y."/>
            <person name="Xu X."/>
            <person name="Sun L."/>
            <person name="Chen S."/>
            <person name="Nie H."/>
            <person name="Peng J."/>
            <person name="Xu J."/>
            <person name="Wang Y."/>
            <person name="Yuan Z."/>
            <person name="Wen Y."/>
            <person name="Yao Z."/>
            <person name="Shen Y."/>
            <person name="Qiang B."/>
            <person name="Hou Y."/>
            <person name="Yu J."/>
            <person name="Jin Q."/>
        </authorList>
    </citation>
    <scope>NUCLEOTIDE SEQUENCE [LARGE SCALE GENOMIC DNA]</scope>
    <source>
        <strain>Sd197</strain>
    </source>
</reference>
<accession>Q327U6</accession>
<organism>
    <name type="scientific">Shigella dysenteriae serotype 1 (strain Sd197)</name>
    <dbReference type="NCBI Taxonomy" id="300267"/>
    <lineage>
        <taxon>Bacteria</taxon>
        <taxon>Pseudomonadati</taxon>
        <taxon>Pseudomonadota</taxon>
        <taxon>Gammaproteobacteria</taxon>
        <taxon>Enterobacterales</taxon>
        <taxon>Enterobacteriaceae</taxon>
        <taxon>Shigella</taxon>
    </lineage>
</organism>